<organism>
    <name type="scientific">Lolium perenne</name>
    <name type="common">Perennial ryegrass</name>
    <dbReference type="NCBI Taxonomy" id="4522"/>
    <lineage>
        <taxon>Eukaryota</taxon>
        <taxon>Viridiplantae</taxon>
        <taxon>Streptophyta</taxon>
        <taxon>Embryophyta</taxon>
        <taxon>Tracheophyta</taxon>
        <taxon>Spermatophyta</taxon>
        <taxon>Magnoliopsida</taxon>
        <taxon>Liliopsida</taxon>
        <taxon>Poales</taxon>
        <taxon>Poaceae</taxon>
        <taxon>BOP clade</taxon>
        <taxon>Pooideae</taxon>
        <taxon>Poodae</taxon>
        <taxon>Poeae</taxon>
        <taxon>Poeae Chloroplast Group 2 (Poeae type)</taxon>
        <taxon>Loliodinae</taxon>
        <taxon>Loliinae</taxon>
        <taxon>Lolium</taxon>
    </lineage>
</organism>
<keyword id="KW-0150">Chloroplast</keyword>
<keyword id="KW-0472">Membrane</keyword>
<keyword id="KW-0934">Plastid</keyword>
<keyword id="KW-0793">Thylakoid</keyword>
<keyword id="KW-0812">Transmembrane</keyword>
<keyword id="KW-1133">Transmembrane helix</keyword>
<protein>
    <recommendedName>
        <fullName evidence="1">Protein PsbN</fullName>
    </recommendedName>
</protein>
<proteinExistence type="inferred from homology"/>
<feature type="chain" id="PRO_0000362202" description="Protein PsbN">
    <location>
        <begin position="1"/>
        <end position="43"/>
    </location>
</feature>
<feature type="transmembrane region" description="Helical" evidence="1">
    <location>
        <begin position="5"/>
        <end position="27"/>
    </location>
</feature>
<sequence>METATLVAISISGLLVSFTGYALYTAFGQPSQQLRDPFEEHGD</sequence>
<accession>A8Y9B4</accession>
<geneLocation type="chloroplast"/>
<comment type="function">
    <text evidence="1">May play a role in photosystem I and II biogenesis.</text>
</comment>
<comment type="subcellular location">
    <subcellularLocation>
        <location evidence="1">Plastid</location>
        <location evidence="1">Chloroplast thylakoid membrane</location>
        <topology evidence="1">Single-pass membrane protein</topology>
    </subcellularLocation>
</comment>
<comment type="similarity">
    <text evidence="1">Belongs to the PsbN family.</text>
</comment>
<comment type="caution">
    <text evidence="1">Originally thought to be a component of PSII; based on experiments in Synechocystis, N.tabacum and barley, and its absence from PSII in T.elongatus and T.vulcanus, this is probably not true.</text>
</comment>
<evidence type="ECO:0000255" key="1">
    <source>
        <dbReference type="HAMAP-Rule" id="MF_00293"/>
    </source>
</evidence>
<name>PSBN_LOLPR</name>
<reference key="1">
    <citation type="journal article" date="2008" name="PLoS ONE">
        <title>An optimized chloroplast DNA extraction protocol for grasses (Poaceae) proves suitable for whole plastid genome sequencing and SNP detection.</title>
        <authorList>
            <person name="Diekmann K."/>
            <person name="Hodkinson T.R."/>
            <person name="Fricke E."/>
            <person name="Barth S."/>
        </authorList>
    </citation>
    <scope>NUCLEOTIDE SEQUENCE [LARGE SCALE GENOMIC DNA]</scope>
    <source>
        <strain>cv. Cashel</strain>
    </source>
</reference>
<gene>
    <name evidence="1" type="primary">psbN</name>
    <name type="ordered locus">LopeCp069</name>
</gene>
<dbReference type="EMBL" id="AM777385">
    <property type="protein sequence ID" value="CAO86003.1"/>
    <property type="molecule type" value="Genomic_DNA"/>
</dbReference>
<dbReference type="RefSeq" id="YP_001531309.1">
    <property type="nucleotide sequence ID" value="NC_009950.1"/>
</dbReference>
<dbReference type="SMR" id="A8Y9B4"/>
<dbReference type="GeneID" id="5696594"/>
<dbReference type="KEGG" id="lper:5696594"/>
<dbReference type="GO" id="GO:0009535">
    <property type="term" value="C:chloroplast thylakoid membrane"/>
    <property type="evidence" value="ECO:0007669"/>
    <property type="project" value="UniProtKB-SubCell"/>
</dbReference>
<dbReference type="GO" id="GO:0015979">
    <property type="term" value="P:photosynthesis"/>
    <property type="evidence" value="ECO:0007669"/>
    <property type="project" value="InterPro"/>
</dbReference>
<dbReference type="HAMAP" id="MF_00293">
    <property type="entry name" value="PSII_PsbN"/>
    <property type="match status" value="1"/>
</dbReference>
<dbReference type="InterPro" id="IPR003398">
    <property type="entry name" value="PSII_PsbN"/>
</dbReference>
<dbReference type="PANTHER" id="PTHR35326">
    <property type="entry name" value="PROTEIN PSBN"/>
    <property type="match status" value="1"/>
</dbReference>
<dbReference type="PANTHER" id="PTHR35326:SF3">
    <property type="entry name" value="PROTEIN PSBN"/>
    <property type="match status" value="1"/>
</dbReference>
<dbReference type="Pfam" id="PF02468">
    <property type="entry name" value="PsbN"/>
    <property type="match status" value="1"/>
</dbReference>